<proteinExistence type="inferred from homology"/>
<gene>
    <name evidence="1" type="primary">rppH</name>
    <name evidence="1" type="synonym">nudH</name>
    <name type="ordered locus">SFV_2908</name>
</gene>
<comment type="function">
    <text evidence="1">Accelerates the degradation of transcripts by removing pyrophosphate from the 5'-end of triphosphorylated RNA, leading to a more labile monophosphorylated state that can stimulate subsequent ribonuclease cleavage.</text>
</comment>
<comment type="cofactor">
    <cofactor evidence="1">
        <name>a divalent metal cation</name>
        <dbReference type="ChEBI" id="CHEBI:60240"/>
    </cofactor>
</comment>
<comment type="similarity">
    <text evidence="1">Belongs to the Nudix hydrolase family. RppH subfamily.</text>
</comment>
<accession>Q0T134</accession>
<reference key="1">
    <citation type="journal article" date="2006" name="BMC Genomics">
        <title>Complete genome sequence of Shigella flexneri 5b and comparison with Shigella flexneri 2a.</title>
        <authorList>
            <person name="Nie H."/>
            <person name="Yang F."/>
            <person name="Zhang X."/>
            <person name="Yang J."/>
            <person name="Chen L."/>
            <person name="Wang J."/>
            <person name="Xiong Z."/>
            <person name="Peng J."/>
            <person name="Sun L."/>
            <person name="Dong J."/>
            <person name="Xue Y."/>
            <person name="Xu X."/>
            <person name="Chen S."/>
            <person name="Yao Z."/>
            <person name="Shen Y."/>
            <person name="Jin Q."/>
        </authorList>
    </citation>
    <scope>NUCLEOTIDE SEQUENCE [LARGE SCALE GENOMIC DNA]</scope>
    <source>
        <strain>8401</strain>
    </source>
</reference>
<keyword id="KW-0378">Hydrolase</keyword>
<evidence type="ECO:0000255" key="1">
    <source>
        <dbReference type="HAMAP-Rule" id="MF_00298"/>
    </source>
</evidence>
<sequence>MIDDDGYRPNVGIVICNRQGQVMWARRFGQHSWQFPQGGINPGESAEQAMYRELFEEVGLSRKDVRILASTRNWLRYKLPKRLVRWDTKPVCIGQKQKWFLLQLVSGDAEINMQTSSTPEFDGWRWVSYWYPVRQVVSFKRDVYRRVMKEFASVVMSLQENTPKPQNASAYRRKRG</sequence>
<protein>
    <recommendedName>
        <fullName evidence="1">RNA pyrophosphohydrolase</fullName>
        <ecNumber evidence="1">3.6.1.-</ecNumber>
    </recommendedName>
    <alternativeName>
        <fullName evidence="1">(Di)nucleoside polyphosphate hydrolase</fullName>
    </alternativeName>
</protein>
<organism>
    <name type="scientific">Shigella flexneri serotype 5b (strain 8401)</name>
    <dbReference type="NCBI Taxonomy" id="373384"/>
    <lineage>
        <taxon>Bacteria</taxon>
        <taxon>Pseudomonadati</taxon>
        <taxon>Pseudomonadota</taxon>
        <taxon>Gammaproteobacteria</taxon>
        <taxon>Enterobacterales</taxon>
        <taxon>Enterobacteriaceae</taxon>
        <taxon>Shigella</taxon>
    </lineage>
</organism>
<feature type="chain" id="PRO_1000022003" description="RNA pyrophosphohydrolase">
    <location>
        <begin position="1"/>
        <end position="176"/>
    </location>
</feature>
<feature type="domain" description="Nudix hydrolase" evidence="1">
    <location>
        <begin position="6"/>
        <end position="149"/>
    </location>
</feature>
<feature type="short sequence motif" description="Nudix box">
    <location>
        <begin position="38"/>
        <end position="59"/>
    </location>
</feature>
<name>RPPH_SHIF8</name>
<dbReference type="EC" id="3.6.1.-" evidence="1"/>
<dbReference type="EMBL" id="CP000266">
    <property type="protein sequence ID" value="ABF04981.1"/>
    <property type="molecule type" value="Genomic_DNA"/>
</dbReference>
<dbReference type="RefSeq" id="WP_000564489.1">
    <property type="nucleotide sequence ID" value="NC_008258.1"/>
</dbReference>
<dbReference type="SMR" id="Q0T134"/>
<dbReference type="GeneID" id="75203778"/>
<dbReference type="KEGG" id="sfv:SFV_2908"/>
<dbReference type="HOGENOM" id="CLU_087195_3_2_6"/>
<dbReference type="Proteomes" id="UP000000659">
    <property type="component" value="Chromosome"/>
</dbReference>
<dbReference type="GO" id="GO:0005737">
    <property type="term" value="C:cytoplasm"/>
    <property type="evidence" value="ECO:0007669"/>
    <property type="project" value="TreeGrafter"/>
</dbReference>
<dbReference type="GO" id="GO:0034353">
    <property type="term" value="F:mRNA 5'-diphosphatase activity"/>
    <property type="evidence" value="ECO:0007669"/>
    <property type="project" value="TreeGrafter"/>
</dbReference>
<dbReference type="GO" id="GO:0006402">
    <property type="term" value="P:mRNA catabolic process"/>
    <property type="evidence" value="ECO:0007669"/>
    <property type="project" value="TreeGrafter"/>
</dbReference>
<dbReference type="CDD" id="cd03671">
    <property type="entry name" value="NUDIX_Ap4A_hydrolase_plant_like"/>
    <property type="match status" value="1"/>
</dbReference>
<dbReference type="FunFam" id="3.90.79.10:FF:000001">
    <property type="entry name" value="RNA pyrophosphohydrolase"/>
    <property type="match status" value="1"/>
</dbReference>
<dbReference type="Gene3D" id="3.90.79.10">
    <property type="entry name" value="Nucleoside Triphosphate Pyrophosphohydrolase"/>
    <property type="match status" value="1"/>
</dbReference>
<dbReference type="HAMAP" id="MF_00298">
    <property type="entry name" value="Nudix_RppH"/>
    <property type="match status" value="1"/>
</dbReference>
<dbReference type="InterPro" id="IPR020476">
    <property type="entry name" value="Nudix_hydrolase"/>
</dbReference>
<dbReference type="InterPro" id="IPR015797">
    <property type="entry name" value="NUDIX_hydrolase-like_dom_sf"/>
</dbReference>
<dbReference type="InterPro" id="IPR020084">
    <property type="entry name" value="NUDIX_hydrolase_CS"/>
</dbReference>
<dbReference type="InterPro" id="IPR000086">
    <property type="entry name" value="NUDIX_hydrolase_dom"/>
</dbReference>
<dbReference type="InterPro" id="IPR022927">
    <property type="entry name" value="RppH"/>
</dbReference>
<dbReference type="NCBIfam" id="NF001934">
    <property type="entry name" value="PRK00714.1-1"/>
    <property type="match status" value="1"/>
</dbReference>
<dbReference type="NCBIfam" id="NF001937">
    <property type="entry name" value="PRK00714.1-4"/>
    <property type="match status" value="1"/>
</dbReference>
<dbReference type="NCBIfam" id="NF001938">
    <property type="entry name" value="PRK00714.1-5"/>
    <property type="match status" value="1"/>
</dbReference>
<dbReference type="PANTHER" id="PTHR23114">
    <property type="entry name" value="M7GPPPN-MRNA HYDROLASE"/>
    <property type="match status" value="1"/>
</dbReference>
<dbReference type="PANTHER" id="PTHR23114:SF17">
    <property type="entry name" value="M7GPPPN-MRNA HYDROLASE"/>
    <property type="match status" value="1"/>
</dbReference>
<dbReference type="Pfam" id="PF00293">
    <property type="entry name" value="NUDIX"/>
    <property type="match status" value="1"/>
</dbReference>
<dbReference type="PRINTS" id="PR00502">
    <property type="entry name" value="NUDIXFAMILY"/>
</dbReference>
<dbReference type="SUPFAM" id="SSF55811">
    <property type="entry name" value="Nudix"/>
    <property type="match status" value="1"/>
</dbReference>
<dbReference type="PROSITE" id="PS51462">
    <property type="entry name" value="NUDIX"/>
    <property type="match status" value="1"/>
</dbReference>
<dbReference type="PROSITE" id="PS00893">
    <property type="entry name" value="NUDIX_BOX"/>
    <property type="match status" value="1"/>
</dbReference>